<protein>
    <recommendedName>
        <fullName evidence="1">Large ribosomal subunit protein bL32</fullName>
    </recommendedName>
    <alternativeName>
        <fullName evidence="3">50S ribosomal protein L32</fullName>
    </alternativeName>
</protein>
<proteinExistence type="inferred from homology"/>
<sequence length="66" mass="7550">MAVPKRRKSKSKVRTKRAHHAIGKPNLVPCPNCNVYRLPHRICPTCGFYKTGIVLEPKVKKPKEEN</sequence>
<name>RL32_LEPBJ</name>
<evidence type="ECO:0000255" key="1">
    <source>
        <dbReference type="HAMAP-Rule" id="MF_00340"/>
    </source>
</evidence>
<evidence type="ECO:0000256" key="2">
    <source>
        <dbReference type="SAM" id="MobiDB-lite"/>
    </source>
</evidence>
<evidence type="ECO:0000305" key="3"/>
<gene>
    <name evidence="1" type="primary">rpmF</name>
    <name type="ordered locus">LBJ_0939</name>
</gene>
<reference key="1">
    <citation type="journal article" date="2006" name="Proc. Natl. Acad. Sci. U.S.A.">
        <title>Genome reduction in Leptospira borgpetersenii reflects limited transmission potential.</title>
        <authorList>
            <person name="Bulach D.M."/>
            <person name="Zuerner R.L."/>
            <person name="Wilson P."/>
            <person name="Seemann T."/>
            <person name="McGrath A."/>
            <person name="Cullen P.A."/>
            <person name="Davis J."/>
            <person name="Johnson M."/>
            <person name="Kuczek E."/>
            <person name="Alt D.P."/>
            <person name="Peterson-Burch B."/>
            <person name="Coppel R.L."/>
            <person name="Rood J.I."/>
            <person name="Davies J.K."/>
            <person name="Adler B."/>
        </authorList>
    </citation>
    <scope>NUCLEOTIDE SEQUENCE [LARGE SCALE GENOMIC DNA]</scope>
    <source>
        <strain>JB197</strain>
    </source>
</reference>
<organism>
    <name type="scientific">Leptospira borgpetersenii serovar Hardjo-bovis (strain JB197)</name>
    <dbReference type="NCBI Taxonomy" id="355277"/>
    <lineage>
        <taxon>Bacteria</taxon>
        <taxon>Pseudomonadati</taxon>
        <taxon>Spirochaetota</taxon>
        <taxon>Spirochaetia</taxon>
        <taxon>Leptospirales</taxon>
        <taxon>Leptospiraceae</taxon>
        <taxon>Leptospira</taxon>
    </lineage>
</organism>
<dbReference type="EMBL" id="CP000350">
    <property type="protein sequence ID" value="ABJ75583.1"/>
    <property type="molecule type" value="Genomic_DNA"/>
</dbReference>
<dbReference type="RefSeq" id="WP_004281555.1">
    <property type="nucleotide sequence ID" value="NC_008510.1"/>
</dbReference>
<dbReference type="SMR" id="Q04U37"/>
<dbReference type="KEGG" id="lbj:LBJ_0939"/>
<dbReference type="HOGENOM" id="CLU_129084_1_3_12"/>
<dbReference type="Proteomes" id="UP000000656">
    <property type="component" value="Chromosome 1"/>
</dbReference>
<dbReference type="GO" id="GO:0015934">
    <property type="term" value="C:large ribosomal subunit"/>
    <property type="evidence" value="ECO:0007669"/>
    <property type="project" value="InterPro"/>
</dbReference>
<dbReference type="GO" id="GO:0003735">
    <property type="term" value="F:structural constituent of ribosome"/>
    <property type="evidence" value="ECO:0007669"/>
    <property type="project" value="InterPro"/>
</dbReference>
<dbReference type="GO" id="GO:0006412">
    <property type="term" value="P:translation"/>
    <property type="evidence" value="ECO:0007669"/>
    <property type="project" value="UniProtKB-UniRule"/>
</dbReference>
<dbReference type="HAMAP" id="MF_00340">
    <property type="entry name" value="Ribosomal_bL32"/>
    <property type="match status" value="1"/>
</dbReference>
<dbReference type="InterPro" id="IPR002677">
    <property type="entry name" value="Ribosomal_bL32"/>
</dbReference>
<dbReference type="InterPro" id="IPR044957">
    <property type="entry name" value="Ribosomal_bL32_bact"/>
</dbReference>
<dbReference type="InterPro" id="IPR011332">
    <property type="entry name" value="Ribosomal_zn-bd"/>
</dbReference>
<dbReference type="NCBIfam" id="TIGR01031">
    <property type="entry name" value="rpmF_bact"/>
    <property type="match status" value="1"/>
</dbReference>
<dbReference type="PANTHER" id="PTHR35534">
    <property type="entry name" value="50S RIBOSOMAL PROTEIN L32"/>
    <property type="match status" value="1"/>
</dbReference>
<dbReference type="PANTHER" id="PTHR35534:SF1">
    <property type="entry name" value="LARGE RIBOSOMAL SUBUNIT PROTEIN BL32"/>
    <property type="match status" value="1"/>
</dbReference>
<dbReference type="Pfam" id="PF01783">
    <property type="entry name" value="Ribosomal_L32p"/>
    <property type="match status" value="1"/>
</dbReference>
<dbReference type="SUPFAM" id="SSF57829">
    <property type="entry name" value="Zn-binding ribosomal proteins"/>
    <property type="match status" value="1"/>
</dbReference>
<accession>Q04U37</accession>
<comment type="similarity">
    <text evidence="1">Belongs to the bacterial ribosomal protein bL32 family.</text>
</comment>
<feature type="chain" id="PRO_0000296490" description="Large ribosomal subunit protein bL32">
    <location>
        <begin position="1"/>
        <end position="66"/>
    </location>
</feature>
<feature type="region of interest" description="Disordered" evidence="2">
    <location>
        <begin position="1"/>
        <end position="20"/>
    </location>
</feature>
<keyword id="KW-0687">Ribonucleoprotein</keyword>
<keyword id="KW-0689">Ribosomal protein</keyword>